<comment type="function">
    <text evidence="1">Joins adenosylcobinamide-GDP and alpha-ribazole to generate adenosylcobalamin (Ado-cobalamin). Also synthesizes adenosylcobalamin 5'-phosphate from adenosylcobinamide-GDP and alpha-ribazole 5'-phosphate.</text>
</comment>
<comment type="catalytic activity">
    <reaction evidence="1">
        <text>alpha-ribazole + adenosylcob(III)inamide-GDP = adenosylcob(III)alamin + GMP + H(+)</text>
        <dbReference type="Rhea" id="RHEA:16049"/>
        <dbReference type="ChEBI" id="CHEBI:10329"/>
        <dbReference type="ChEBI" id="CHEBI:15378"/>
        <dbReference type="ChEBI" id="CHEBI:18408"/>
        <dbReference type="ChEBI" id="CHEBI:58115"/>
        <dbReference type="ChEBI" id="CHEBI:60487"/>
        <dbReference type="EC" id="2.7.8.26"/>
    </reaction>
</comment>
<comment type="catalytic activity">
    <reaction evidence="1">
        <text>alpha-ribazole 5'-phosphate + adenosylcob(III)inamide-GDP = adenosylcob(III)alamin 5'-phosphate + GMP + H(+)</text>
        <dbReference type="Rhea" id="RHEA:23560"/>
        <dbReference type="ChEBI" id="CHEBI:15378"/>
        <dbReference type="ChEBI" id="CHEBI:57918"/>
        <dbReference type="ChEBI" id="CHEBI:58115"/>
        <dbReference type="ChEBI" id="CHEBI:60487"/>
        <dbReference type="ChEBI" id="CHEBI:60493"/>
        <dbReference type="EC" id="2.7.8.26"/>
    </reaction>
</comment>
<comment type="cofactor">
    <cofactor evidence="1">
        <name>Mg(2+)</name>
        <dbReference type="ChEBI" id="CHEBI:18420"/>
    </cofactor>
</comment>
<comment type="pathway">
    <text evidence="1">Cofactor biosynthesis; adenosylcobalamin biosynthesis; adenosylcobalamin from cob(II)yrinate a,c-diamide: step 7/7.</text>
</comment>
<comment type="subcellular location">
    <subcellularLocation>
        <location evidence="1">Cell inner membrane</location>
        <topology evidence="1">Multi-pass membrane protein</topology>
    </subcellularLocation>
</comment>
<comment type="similarity">
    <text evidence="1">Belongs to the CobS family.</text>
</comment>
<keyword id="KW-0997">Cell inner membrane</keyword>
<keyword id="KW-1003">Cell membrane</keyword>
<keyword id="KW-0169">Cobalamin biosynthesis</keyword>
<keyword id="KW-0460">Magnesium</keyword>
<keyword id="KW-0472">Membrane</keyword>
<keyword id="KW-1185">Reference proteome</keyword>
<keyword id="KW-0808">Transferase</keyword>
<keyword id="KW-0812">Transmembrane</keyword>
<keyword id="KW-1133">Transmembrane helix</keyword>
<reference key="1">
    <citation type="submission" date="2002-07" db="EMBL/GenBank/DDBJ databases">
        <title>Synechococcus elongatus PCC 7942 cosmid 3E9.</title>
        <authorList>
            <person name="Holtman C.K."/>
            <person name="Sandoval P."/>
            <person name="Chen Y."/>
            <person name="Socias T."/>
            <person name="Mohler B.J."/>
            <person name="McMurtry S."/>
            <person name="Gonzalez A."/>
            <person name="Salinas I."/>
            <person name="Golden S.S."/>
            <person name="Youderian P."/>
        </authorList>
    </citation>
    <scope>NUCLEOTIDE SEQUENCE [GENOMIC DNA]</scope>
</reference>
<reference key="2">
    <citation type="submission" date="2005-08" db="EMBL/GenBank/DDBJ databases">
        <title>Complete sequence of chromosome 1 of Synechococcus elongatus PCC 7942.</title>
        <authorList>
            <consortium name="US DOE Joint Genome Institute"/>
            <person name="Copeland A."/>
            <person name="Lucas S."/>
            <person name="Lapidus A."/>
            <person name="Barry K."/>
            <person name="Detter J.C."/>
            <person name="Glavina T."/>
            <person name="Hammon N."/>
            <person name="Israni S."/>
            <person name="Pitluck S."/>
            <person name="Schmutz J."/>
            <person name="Larimer F."/>
            <person name="Land M."/>
            <person name="Kyrpides N."/>
            <person name="Lykidis A."/>
            <person name="Golden S."/>
            <person name="Richardson P."/>
        </authorList>
    </citation>
    <scope>NUCLEOTIDE SEQUENCE [LARGE SCALE GENOMIC DNA]</scope>
    <source>
        <strain>ATCC 33912 / PCC 7942 / FACHB-805</strain>
    </source>
</reference>
<dbReference type="EC" id="2.7.8.26" evidence="1"/>
<dbReference type="EMBL" id="X04616">
    <property type="protein sequence ID" value="CAD55622.1"/>
    <property type="molecule type" value="Genomic_DNA"/>
</dbReference>
<dbReference type="EMBL" id="CP000100">
    <property type="protein sequence ID" value="ABB56486.1"/>
    <property type="molecule type" value="Genomic_DNA"/>
</dbReference>
<dbReference type="RefSeq" id="WP_011243375.1">
    <property type="nucleotide sequence ID" value="NZ_JACJTX010000002.1"/>
</dbReference>
<dbReference type="STRING" id="1140.Synpcc7942_0454"/>
<dbReference type="PaxDb" id="1140-Synpcc7942_0454"/>
<dbReference type="GeneID" id="72429276"/>
<dbReference type="KEGG" id="syf:Synpcc7942_0454"/>
<dbReference type="eggNOG" id="COG0368">
    <property type="taxonomic scope" value="Bacteria"/>
</dbReference>
<dbReference type="HOGENOM" id="CLU_057426_3_1_3"/>
<dbReference type="OrthoDB" id="9794626at2"/>
<dbReference type="BioCyc" id="SYNEL:SYNPCC7942_0454-MONOMER"/>
<dbReference type="UniPathway" id="UPA00148">
    <property type="reaction ID" value="UER00238"/>
</dbReference>
<dbReference type="Proteomes" id="UP000889800">
    <property type="component" value="Chromosome"/>
</dbReference>
<dbReference type="GO" id="GO:0005886">
    <property type="term" value="C:plasma membrane"/>
    <property type="evidence" value="ECO:0007669"/>
    <property type="project" value="UniProtKB-SubCell"/>
</dbReference>
<dbReference type="GO" id="GO:0051073">
    <property type="term" value="F:adenosylcobinamide-GDP ribazoletransferase activity"/>
    <property type="evidence" value="ECO:0007669"/>
    <property type="project" value="UniProtKB-UniRule"/>
</dbReference>
<dbReference type="GO" id="GO:0008818">
    <property type="term" value="F:cobalamin 5'-phosphate synthase activity"/>
    <property type="evidence" value="ECO:0007669"/>
    <property type="project" value="UniProtKB-UniRule"/>
</dbReference>
<dbReference type="GO" id="GO:0009236">
    <property type="term" value="P:cobalamin biosynthetic process"/>
    <property type="evidence" value="ECO:0007669"/>
    <property type="project" value="UniProtKB-UniRule"/>
</dbReference>
<dbReference type="HAMAP" id="MF_00719">
    <property type="entry name" value="CobS"/>
    <property type="match status" value="1"/>
</dbReference>
<dbReference type="InterPro" id="IPR003805">
    <property type="entry name" value="CobS"/>
</dbReference>
<dbReference type="NCBIfam" id="TIGR00317">
    <property type="entry name" value="cobS"/>
    <property type="match status" value="1"/>
</dbReference>
<dbReference type="PANTHER" id="PTHR34148">
    <property type="entry name" value="ADENOSYLCOBINAMIDE-GDP RIBAZOLETRANSFERASE"/>
    <property type="match status" value="1"/>
</dbReference>
<dbReference type="PANTHER" id="PTHR34148:SF1">
    <property type="entry name" value="ADENOSYLCOBINAMIDE-GDP RIBAZOLETRANSFERASE"/>
    <property type="match status" value="1"/>
</dbReference>
<dbReference type="Pfam" id="PF02654">
    <property type="entry name" value="CobS"/>
    <property type="match status" value="1"/>
</dbReference>
<gene>
    <name evidence="1" type="primary">cobS</name>
    <name type="ordered locus">Synpcc7942_0454</name>
    <name type="ORF">sek0016</name>
</gene>
<accession>Q8GMS2</accession>
<accession>Q31R33</accession>
<sequence>MIRQLWTELNAAILFYTVLPLPQRWPTQFAGMSRWAPIVGLILGLILAVSDRLLAVGQFPLPLRSLLIVLLAIALTGGLHLDGAMDTADGLAVPNPDRRLEVMSDSHTGAFGAIAAIAIISLKTIALCYLPAPRSLLILLIPVWGRWAQVLAIVRYPYLKAEGKGAIHKQTGRGAIDLLPGAIALVLGIGAIARFHSLTVALQLLAIGLLWAWATGAWLQKKLGGQTGDTYGAIVEWTEALIWVSFTIGQV</sequence>
<feature type="chain" id="PRO_0000146899" description="Adenosylcobinamide-GDP ribazoletransferase">
    <location>
        <begin position="1"/>
        <end position="251"/>
    </location>
</feature>
<feature type="transmembrane region" description="Helical" evidence="1">
    <location>
        <begin position="29"/>
        <end position="49"/>
    </location>
</feature>
<feature type="transmembrane region" description="Helical" evidence="1">
    <location>
        <begin position="65"/>
        <end position="85"/>
    </location>
</feature>
<feature type="transmembrane region" description="Helical" evidence="1">
    <location>
        <begin position="110"/>
        <end position="130"/>
    </location>
</feature>
<feature type="transmembrane region" description="Helical" evidence="1">
    <location>
        <begin position="136"/>
        <end position="156"/>
    </location>
</feature>
<feature type="transmembrane region" description="Helical" evidence="1">
    <location>
        <begin position="175"/>
        <end position="195"/>
    </location>
</feature>
<feature type="transmembrane region" description="Helical" evidence="1">
    <location>
        <begin position="198"/>
        <end position="218"/>
    </location>
</feature>
<feature type="sequence conflict" description="In Ref. 1." evidence="2" ref="1">
    <original>SHTGAFGAIAAIA</original>
    <variation>KSHGCLWRDRCDR</variation>
    <location>
        <begin position="106"/>
        <end position="118"/>
    </location>
</feature>
<feature type="sequence conflict" description="In Ref. 1; CAD55622." evidence="2" ref="1">
    <original>PAPRSLLILLIP</original>
    <variation>SARDRCDFADS</variation>
    <location>
        <begin position="131"/>
        <end position="142"/>
    </location>
</feature>
<organism>
    <name type="scientific">Synechococcus elongatus (strain ATCC 33912 / PCC 7942 / FACHB-805)</name>
    <name type="common">Anacystis nidulans R2</name>
    <dbReference type="NCBI Taxonomy" id="1140"/>
    <lineage>
        <taxon>Bacteria</taxon>
        <taxon>Bacillati</taxon>
        <taxon>Cyanobacteriota</taxon>
        <taxon>Cyanophyceae</taxon>
        <taxon>Synechococcales</taxon>
        <taxon>Synechococcaceae</taxon>
        <taxon>Synechococcus</taxon>
    </lineage>
</organism>
<evidence type="ECO:0000255" key="1">
    <source>
        <dbReference type="HAMAP-Rule" id="MF_00719"/>
    </source>
</evidence>
<evidence type="ECO:0000305" key="2"/>
<name>COBS_SYNE7</name>
<protein>
    <recommendedName>
        <fullName evidence="1">Adenosylcobinamide-GDP ribazoletransferase</fullName>
        <ecNumber evidence="1">2.7.8.26</ecNumber>
    </recommendedName>
    <alternativeName>
        <fullName evidence="1">Cobalamin synthase</fullName>
    </alternativeName>
    <alternativeName>
        <fullName evidence="1">Cobalamin-5'-phosphate synthase</fullName>
    </alternativeName>
</protein>
<proteinExistence type="inferred from homology"/>